<organism>
    <name type="scientific">Homo sapiens</name>
    <name type="common">Human</name>
    <dbReference type="NCBI Taxonomy" id="9606"/>
    <lineage>
        <taxon>Eukaryota</taxon>
        <taxon>Metazoa</taxon>
        <taxon>Chordata</taxon>
        <taxon>Craniata</taxon>
        <taxon>Vertebrata</taxon>
        <taxon>Euteleostomi</taxon>
        <taxon>Mammalia</taxon>
        <taxon>Eutheria</taxon>
        <taxon>Euarchontoglires</taxon>
        <taxon>Primates</taxon>
        <taxon>Haplorrhini</taxon>
        <taxon>Catarrhini</taxon>
        <taxon>Hominidae</taxon>
        <taxon>Homo</taxon>
    </lineage>
</organism>
<feature type="signal peptide" evidence="10">
    <location>
        <begin position="1"/>
        <end position="30"/>
    </location>
</feature>
<feature type="chain" id="PRO_0000015570" description="Granulocyte colony-stimulating factor">
    <location>
        <begin position="31"/>
        <end position="207"/>
    </location>
</feature>
<feature type="glycosylation site" description="O-linked (GalNAc...) threonine" evidence="1">
    <location>
        <position position="166"/>
    </location>
</feature>
<feature type="disulfide bond">
    <location>
        <begin position="69"/>
        <end position="75"/>
    </location>
</feature>
<feature type="disulfide bond">
    <location>
        <begin position="97"/>
        <end position="107"/>
    </location>
</feature>
<feature type="splice variant" id="VSP_002673" description="In isoform Short." evidence="6 7 8">
    <location>
        <begin position="66"/>
        <end position="68"/>
    </location>
</feature>
<feature type="splice variant" id="VSP_045246" description="In isoform 3." evidence="5">
    <location>
        <begin position="69"/>
        <end position="104"/>
    </location>
</feature>
<feature type="sequence variant" id="VAR_013073" description="In dbSNP:rs2227329." evidence="4">
    <original>L</original>
    <variation>M</variation>
    <location>
        <position position="157"/>
    </location>
</feature>
<feature type="sequence variant" id="VAR_013074" description="In dbSNP:rs2227330." evidence="4">
    <original>A</original>
    <variation>T</variation>
    <location>
        <position position="174"/>
    </location>
</feature>
<feature type="strand" evidence="11">
    <location>
        <begin position="37"/>
        <end position="39"/>
    </location>
</feature>
<feature type="helix" evidence="14">
    <location>
        <begin position="41"/>
        <end position="65"/>
    </location>
</feature>
<feature type="helix" evidence="14">
    <location>
        <begin position="69"/>
        <end position="72"/>
    </location>
</feature>
<feature type="helix" evidence="14">
    <location>
        <begin position="77"/>
        <end position="87"/>
    </location>
</feature>
<feature type="strand" evidence="14">
    <location>
        <begin position="99"/>
        <end position="101"/>
    </location>
</feature>
<feature type="helix" evidence="14">
    <location>
        <begin position="104"/>
        <end position="124"/>
    </location>
</feature>
<feature type="turn" evidence="14">
    <location>
        <begin position="125"/>
        <end position="127"/>
    </location>
</feature>
<feature type="turn" evidence="14">
    <location>
        <begin position="130"/>
        <end position="132"/>
    </location>
</feature>
<feature type="helix" evidence="14">
    <location>
        <begin position="133"/>
        <end position="157"/>
    </location>
</feature>
<feature type="strand" evidence="12">
    <location>
        <begin position="166"/>
        <end position="168"/>
    </location>
</feature>
<feature type="helix" evidence="14">
    <location>
        <begin position="176"/>
        <end position="201"/>
    </location>
</feature>
<feature type="turn" evidence="13">
    <location>
        <begin position="203"/>
        <end position="205"/>
    </location>
</feature>
<dbReference type="EMBL" id="X03438">
    <property type="protein sequence ID" value="CAA27168.1"/>
    <property type="molecule type" value="mRNA"/>
</dbReference>
<dbReference type="EMBL" id="X03656">
    <property type="protein sequence ID" value="CAA27291.1"/>
    <property type="molecule type" value="Genomic_DNA"/>
</dbReference>
<dbReference type="EMBL" id="X03655">
    <property type="protein sequence ID" value="CAA27290.1"/>
    <property type="molecule type" value="mRNA"/>
</dbReference>
<dbReference type="EMBL" id="M17706">
    <property type="protein sequence ID" value="AAA35882.1"/>
    <property type="molecule type" value="mRNA"/>
</dbReference>
<dbReference type="EMBL" id="AF388025">
    <property type="protein sequence ID" value="AAK62469.1"/>
    <property type="molecule type" value="Genomic_DNA"/>
</dbReference>
<dbReference type="EMBL" id="CD013926">
    <property type="status" value="NOT_ANNOTATED_CDS"/>
    <property type="molecule type" value="mRNA"/>
</dbReference>
<dbReference type="EMBL" id="AC090844">
    <property type="status" value="NOT_ANNOTATED_CDS"/>
    <property type="molecule type" value="Genomic_DNA"/>
</dbReference>
<dbReference type="EMBL" id="M13008">
    <property type="protein sequence ID" value="AAA03056.1"/>
    <property type="molecule type" value="mRNA"/>
</dbReference>
<dbReference type="CCDS" id="CCDS11357.1">
    <molecule id="P09919-1"/>
</dbReference>
<dbReference type="CCDS" id="CCDS11358.2">
    <molecule id="P09919-3"/>
</dbReference>
<dbReference type="CCDS" id="CCDS42314.1">
    <molecule id="P09919-2"/>
</dbReference>
<dbReference type="PIR" id="A24573">
    <property type="entry name" value="A24573"/>
</dbReference>
<dbReference type="PIR" id="A25093">
    <property type="entry name" value="FQHUGL"/>
</dbReference>
<dbReference type="RefSeq" id="NP_000750.1">
    <molecule id="P09919-1"/>
    <property type="nucleotide sequence ID" value="NM_000759.4"/>
</dbReference>
<dbReference type="RefSeq" id="NP_001171618.1">
    <property type="nucleotide sequence ID" value="NM_001178147.1"/>
</dbReference>
<dbReference type="RefSeq" id="NP_757373.1">
    <molecule id="P09919-2"/>
    <property type="nucleotide sequence ID" value="NM_172219.3"/>
</dbReference>
<dbReference type="RefSeq" id="NP_757374.2">
    <molecule id="P09919-3"/>
    <property type="nucleotide sequence ID" value="NM_172220.3"/>
</dbReference>
<dbReference type="PDB" id="1CD9">
    <property type="method" value="X-ray"/>
    <property type="resolution" value="2.80 A"/>
    <property type="chains" value="A/C=31-207"/>
</dbReference>
<dbReference type="PDB" id="1GNC">
    <property type="method" value="NMR"/>
    <property type="chains" value="A=31-207"/>
</dbReference>
<dbReference type="PDB" id="1PGR">
    <property type="method" value="X-ray"/>
    <property type="resolution" value="3.50 A"/>
    <property type="chains" value="A/C/E/G=31-207"/>
</dbReference>
<dbReference type="PDB" id="1RHG">
    <property type="method" value="X-ray"/>
    <property type="resolution" value="2.20 A"/>
    <property type="chains" value="A/B/C=31-207"/>
</dbReference>
<dbReference type="PDB" id="2D9Q">
    <property type="method" value="X-ray"/>
    <property type="resolution" value="2.80 A"/>
    <property type="chains" value="A=31-207"/>
</dbReference>
<dbReference type="PDB" id="5GW9">
    <property type="method" value="X-ray"/>
    <property type="resolution" value="1.65 A"/>
    <property type="chains" value="A/B/C/D=40-205"/>
</dbReference>
<dbReference type="PDB" id="5ZO6">
    <property type="method" value="X-ray"/>
    <property type="resolution" value="1.70 A"/>
    <property type="chains" value="X=37-205"/>
</dbReference>
<dbReference type="PDBsum" id="1CD9"/>
<dbReference type="PDBsum" id="1GNC"/>
<dbReference type="PDBsum" id="1PGR"/>
<dbReference type="PDBsum" id="1RHG"/>
<dbReference type="PDBsum" id="2D9Q"/>
<dbReference type="PDBsum" id="5GW9"/>
<dbReference type="PDBsum" id="5ZO6"/>
<dbReference type="BMRB" id="P09919"/>
<dbReference type="SMR" id="P09919"/>
<dbReference type="BioGRID" id="107827">
    <property type="interactions" value="17"/>
</dbReference>
<dbReference type="CORUM" id="P09919"/>
<dbReference type="DIP" id="DIP-61120N"/>
<dbReference type="FunCoup" id="P09919">
    <property type="interactions" value="757"/>
</dbReference>
<dbReference type="IntAct" id="P09919">
    <property type="interactions" value="9"/>
</dbReference>
<dbReference type="STRING" id="9606.ENSP00000225474"/>
<dbReference type="Allergome" id="8367">
    <property type="allergen name" value="Hom s G-CSF"/>
</dbReference>
<dbReference type="CarbonylDB" id="P09919"/>
<dbReference type="GlyCosmos" id="P09919">
    <property type="glycosylation" value="1 site, No reported glycans"/>
</dbReference>
<dbReference type="GlyGen" id="P09919">
    <property type="glycosylation" value="2 sites"/>
</dbReference>
<dbReference type="iPTMnet" id="P09919"/>
<dbReference type="MetOSite" id="P09919"/>
<dbReference type="PhosphoSitePlus" id="P09919"/>
<dbReference type="BioMuta" id="CSF3"/>
<dbReference type="DMDM" id="117564"/>
<dbReference type="MassIVE" id="P09919"/>
<dbReference type="PaxDb" id="9606-ENSP00000225474"/>
<dbReference type="PeptideAtlas" id="P09919"/>
<dbReference type="ProteomicsDB" id="2347"/>
<dbReference type="ProteomicsDB" id="52279">
    <molecule id="P09919-1"/>
</dbReference>
<dbReference type="ProteomicsDB" id="52280">
    <molecule id="P09919-2"/>
</dbReference>
<dbReference type="Antibodypedia" id="799">
    <property type="antibodies" value="1369 antibodies from 40 providers"/>
</dbReference>
<dbReference type="DNASU" id="1440"/>
<dbReference type="Ensembl" id="ENST00000225474.6">
    <molecule id="P09919-1"/>
    <property type="protein sequence ID" value="ENSP00000225474.2"/>
    <property type="gene ID" value="ENSG00000108342.13"/>
</dbReference>
<dbReference type="Ensembl" id="ENST00000394148.7">
    <molecule id="P09919-3"/>
    <property type="protein sequence ID" value="ENSP00000377704.3"/>
    <property type="gene ID" value="ENSG00000108342.13"/>
</dbReference>
<dbReference type="Ensembl" id="ENST00000394149.8">
    <molecule id="P09919-2"/>
    <property type="protein sequence ID" value="ENSP00000377705.4"/>
    <property type="gene ID" value="ENSG00000108342.13"/>
</dbReference>
<dbReference type="GeneID" id="1440"/>
<dbReference type="KEGG" id="hsa:1440"/>
<dbReference type="MANE-Select" id="ENST00000394149.8">
    <molecule id="P09919-2"/>
    <property type="protein sequence ID" value="ENSP00000377705.4"/>
    <property type="RefSeq nucleotide sequence ID" value="NM_172219.3"/>
    <property type="RefSeq protein sequence ID" value="NP_757373.1"/>
</dbReference>
<dbReference type="UCSC" id="uc002htp.4">
    <molecule id="P09919-1"/>
    <property type="organism name" value="human"/>
</dbReference>
<dbReference type="AGR" id="HGNC:2438"/>
<dbReference type="CTD" id="1440"/>
<dbReference type="DisGeNET" id="1440"/>
<dbReference type="GeneCards" id="CSF3"/>
<dbReference type="HGNC" id="HGNC:2438">
    <property type="gene designation" value="CSF3"/>
</dbReference>
<dbReference type="HPA" id="ENSG00000108342">
    <property type="expression patterns" value="Tissue enhanced (lung, urinary bladder)"/>
</dbReference>
<dbReference type="MalaCards" id="CSF3"/>
<dbReference type="MIM" id="138970">
    <property type="type" value="gene"/>
</dbReference>
<dbReference type="neXtProt" id="NX_P09919"/>
<dbReference type="OpenTargets" id="ENSG00000108342"/>
<dbReference type="PharmGKB" id="PA26941"/>
<dbReference type="VEuPathDB" id="HostDB:ENSG00000108342"/>
<dbReference type="eggNOG" id="ENOG502SCNA">
    <property type="taxonomic scope" value="Eukaryota"/>
</dbReference>
<dbReference type="GeneTree" id="ENSGT00390000017328"/>
<dbReference type="InParanoid" id="P09919"/>
<dbReference type="OMA" id="APLEQCH"/>
<dbReference type="OrthoDB" id="9896489at2759"/>
<dbReference type="PAN-GO" id="P09919">
    <property type="GO annotations" value="6 GO annotations based on evolutionary models"/>
</dbReference>
<dbReference type="PhylomeDB" id="P09919"/>
<dbReference type="TreeFam" id="TF337698"/>
<dbReference type="PathwayCommons" id="P09919"/>
<dbReference type="Reactome" id="R-HSA-449836">
    <property type="pathway name" value="Other interleukin signaling"/>
</dbReference>
<dbReference type="Reactome" id="R-HSA-6783783">
    <property type="pathway name" value="Interleukin-10 signaling"/>
</dbReference>
<dbReference type="Reactome" id="R-HSA-9674555">
    <property type="pathway name" value="Signaling by CSF3 (G-CSF)"/>
</dbReference>
<dbReference type="Reactome" id="R-HSA-9705462">
    <property type="pathway name" value="Inactivation of CSF3 (G-CSF) signaling"/>
</dbReference>
<dbReference type="SignaLink" id="P09919"/>
<dbReference type="SIGNOR" id="P09919"/>
<dbReference type="BioGRID-ORCS" id="1440">
    <property type="hits" value="14 hits in 1145 CRISPR screens"/>
</dbReference>
<dbReference type="ChiTaRS" id="CSF3">
    <property type="organism name" value="human"/>
</dbReference>
<dbReference type="EvolutionaryTrace" id="P09919"/>
<dbReference type="GeneWiki" id="Granulocyte_colony-stimulating_factor"/>
<dbReference type="GenomeRNAi" id="1440"/>
<dbReference type="Pharos" id="P09919">
    <property type="development level" value="Tbio"/>
</dbReference>
<dbReference type="PRO" id="PR:P09919"/>
<dbReference type="Proteomes" id="UP000005640">
    <property type="component" value="Chromosome 17"/>
</dbReference>
<dbReference type="RNAct" id="P09919">
    <property type="molecule type" value="protein"/>
</dbReference>
<dbReference type="Bgee" id="ENSG00000108342">
    <property type="expression patterns" value="Expressed in male germ line stem cell (sensu Vertebrata) in testis and 133 other cell types or tissues"/>
</dbReference>
<dbReference type="ExpressionAtlas" id="P09919">
    <property type="expression patterns" value="baseline and differential"/>
</dbReference>
<dbReference type="GO" id="GO:0071682">
    <property type="term" value="C:endocytic vesicle lumen"/>
    <property type="evidence" value="ECO:0000304"/>
    <property type="project" value="Reactome"/>
</dbReference>
<dbReference type="GO" id="GO:0005576">
    <property type="term" value="C:extracellular region"/>
    <property type="evidence" value="ECO:0000304"/>
    <property type="project" value="Reactome"/>
</dbReference>
<dbReference type="GO" id="GO:0005615">
    <property type="term" value="C:extracellular space"/>
    <property type="evidence" value="ECO:0000318"/>
    <property type="project" value="GO_Central"/>
</dbReference>
<dbReference type="GO" id="GO:0043202">
    <property type="term" value="C:lysosomal lumen"/>
    <property type="evidence" value="ECO:0000304"/>
    <property type="project" value="Reactome"/>
</dbReference>
<dbReference type="GO" id="GO:0005125">
    <property type="term" value="F:cytokine activity"/>
    <property type="evidence" value="ECO:0000314"/>
    <property type="project" value="BHF-UCL"/>
</dbReference>
<dbReference type="GO" id="GO:0019899">
    <property type="term" value="F:enzyme binding"/>
    <property type="evidence" value="ECO:0000353"/>
    <property type="project" value="UniProtKB"/>
</dbReference>
<dbReference type="GO" id="GO:0005130">
    <property type="term" value="F:granulocyte colony-stimulating factor receptor binding"/>
    <property type="evidence" value="ECO:0000318"/>
    <property type="project" value="GO_Central"/>
</dbReference>
<dbReference type="GO" id="GO:0008083">
    <property type="term" value="F:growth factor activity"/>
    <property type="evidence" value="ECO:0000318"/>
    <property type="project" value="GO_Central"/>
</dbReference>
<dbReference type="GO" id="GO:0071345">
    <property type="term" value="P:cellular response to cytokine stimulus"/>
    <property type="evidence" value="ECO:0000314"/>
    <property type="project" value="BHF-UCL"/>
</dbReference>
<dbReference type="GO" id="GO:0071222">
    <property type="term" value="P:cellular response to lipopolysaccharide"/>
    <property type="evidence" value="ECO:0007669"/>
    <property type="project" value="Ensembl"/>
</dbReference>
<dbReference type="GO" id="GO:0019221">
    <property type="term" value="P:cytokine-mediated signaling pathway"/>
    <property type="evidence" value="ECO:0000303"/>
    <property type="project" value="UniProtKB"/>
</dbReference>
<dbReference type="GO" id="GO:0038158">
    <property type="term" value="P:granulocyte colony-stimulating factor signaling pathway"/>
    <property type="evidence" value="ECO:0000314"/>
    <property type="project" value="BHF-UCL"/>
</dbReference>
<dbReference type="GO" id="GO:0030851">
    <property type="term" value="P:granulocyte differentiation"/>
    <property type="evidence" value="ECO:0000303"/>
    <property type="project" value="UniProtKB"/>
</dbReference>
<dbReference type="GO" id="GO:0006955">
    <property type="term" value="P:immune response"/>
    <property type="evidence" value="ECO:0007669"/>
    <property type="project" value="InterPro"/>
</dbReference>
<dbReference type="GO" id="GO:0030838">
    <property type="term" value="P:positive regulation of actin filament polymerization"/>
    <property type="evidence" value="ECO:0000314"/>
    <property type="project" value="BHF-UCL"/>
</dbReference>
<dbReference type="GO" id="GO:0008284">
    <property type="term" value="P:positive regulation of cell population proliferation"/>
    <property type="evidence" value="ECO:0000318"/>
    <property type="project" value="GO_Central"/>
</dbReference>
<dbReference type="GO" id="GO:0045639">
    <property type="term" value="P:positive regulation of myeloid cell differentiation"/>
    <property type="evidence" value="ECO:0000318"/>
    <property type="project" value="GO_Central"/>
</dbReference>
<dbReference type="GO" id="GO:0051897">
    <property type="term" value="P:positive regulation of phosphatidylinositol 3-kinase/protein kinase B signal transduction"/>
    <property type="evidence" value="ECO:0000314"/>
    <property type="project" value="BHF-UCL"/>
</dbReference>
<dbReference type="GO" id="GO:0045944">
    <property type="term" value="P:positive regulation of transcription by RNA polymerase II"/>
    <property type="evidence" value="ECO:0000314"/>
    <property type="project" value="BHF-UCL"/>
</dbReference>
<dbReference type="GO" id="GO:0110053">
    <property type="term" value="P:regulation of actin filament organization"/>
    <property type="evidence" value="ECO:0000314"/>
    <property type="project" value="BHF-UCL"/>
</dbReference>
<dbReference type="GO" id="GO:0045471">
    <property type="term" value="P:response to ethanol"/>
    <property type="evidence" value="ECO:0007669"/>
    <property type="project" value="Ensembl"/>
</dbReference>
<dbReference type="FunFam" id="1.20.1250.10:FF:000021">
    <property type="entry name" value="Granulocyte colony-stimulating factor"/>
    <property type="match status" value="1"/>
</dbReference>
<dbReference type="Gene3D" id="1.20.1250.10">
    <property type="match status" value="1"/>
</dbReference>
<dbReference type="InterPro" id="IPR009079">
    <property type="entry name" value="4_helix_cytokine-like_core"/>
</dbReference>
<dbReference type="InterPro" id="IPR040117">
    <property type="entry name" value="GCSF/MGF"/>
</dbReference>
<dbReference type="InterPro" id="IPR030474">
    <property type="entry name" value="IL-6/GCSF/MGF"/>
</dbReference>
<dbReference type="InterPro" id="IPR030473">
    <property type="entry name" value="IL6/GCSF/MGF_CS"/>
</dbReference>
<dbReference type="PANTHER" id="PTHR10511">
    <property type="entry name" value="GRANULOCYTE COLONY-STIMULATING FACTOR"/>
    <property type="match status" value="1"/>
</dbReference>
<dbReference type="PANTHER" id="PTHR10511:SF2">
    <property type="entry name" value="GRANULOCYTE COLONY-STIMULATING FACTOR"/>
    <property type="match status" value="1"/>
</dbReference>
<dbReference type="Pfam" id="PF16647">
    <property type="entry name" value="GCSF"/>
    <property type="match status" value="1"/>
</dbReference>
<dbReference type="PIRSF" id="PIRSF001935">
    <property type="entry name" value="IL6_MGF_GCSF"/>
    <property type="match status" value="1"/>
</dbReference>
<dbReference type="PRINTS" id="PR00433">
    <property type="entry name" value="IL6GCSFMGF"/>
</dbReference>
<dbReference type="SMART" id="SM00126">
    <property type="entry name" value="IL6"/>
    <property type="match status" value="1"/>
</dbReference>
<dbReference type="SUPFAM" id="SSF47266">
    <property type="entry name" value="4-helical cytokines"/>
    <property type="match status" value="1"/>
</dbReference>
<dbReference type="PROSITE" id="PS00254">
    <property type="entry name" value="INTERLEUKIN_6"/>
    <property type="match status" value="1"/>
</dbReference>
<comment type="function">
    <text>Granulocyte/macrophage colony-stimulating factors are cytokines that act in hematopoiesis by controlling the production, differentiation, and function of 2 related white cell populations of the blood, the granulocytes and the monocytes-macrophages. This CSF induces granulocytes.</text>
</comment>
<comment type="subunit">
    <text evidence="2 3">Monomer.</text>
</comment>
<comment type="subcellular location">
    <subcellularLocation>
        <location>Secreted</location>
    </subcellularLocation>
</comment>
<comment type="alternative products">
    <event type="alternative splicing"/>
    <isoform>
        <id>P09919-1</id>
        <name>Long</name>
        <sequence type="displayed"/>
    </isoform>
    <isoform>
        <id>P09919-2</id>
        <name>Short</name>
        <sequence type="described" ref="VSP_002673"/>
    </isoform>
    <isoform>
        <id>P09919-3</id>
        <name>3</name>
        <sequence type="described" ref="VSP_045246"/>
    </isoform>
</comment>
<comment type="PTM">
    <text>O-glycan consists of Gal-GalNAc disaccharide which can be modified with up to two sialic acid residues (done in recombinantly expressed G-CSF from CHO cells).</text>
</comment>
<comment type="pharmaceutical">
    <text>Available under the names Neupogen or Granulokine (Amgen/Roche) and Granocyte (Rhone-Poulenc). Used to treat neutropenia (a disorder characterized by an extremely low number of neutrophils in blood).</text>
</comment>
<comment type="similarity">
    <text evidence="9">Belongs to the IL-6 superfamily.</text>
</comment>
<comment type="caution">
    <text evidence="9">PubMed:2420009 misquotes the gene name as 'CSF1'.</text>
</comment>
<comment type="online information" name="Neupogen/Granulokine">
    <link uri="https://www.neupogen.com"/>
    <text>Clinical information on Neupogen/Granulokine</text>
</comment>
<reference key="1">
    <citation type="journal article" date="1986" name="Nature">
        <title>Molecular cloning and expression of cDNA for human granulocyte colony-stimulating factor.</title>
        <authorList>
            <person name="Nagata S."/>
            <person name="Tsuchiya M."/>
            <person name="Asano S."/>
            <person name="Kaziro Y."/>
            <person name="Yamazaki T."/>
            <person name="Yamamoto O."/>
            <person name="Hirata Y."/>
            <person name="Kubota N."/>
            <person name="Oheda M."/>
            <person name="Nomura H."/>
            <person name="Ono M."/>
        </authorList>
    </citation>
    <scope>NUCLEOTIDE SEQUENCE [MRNA] (ISOFORM LONG)</scope>
</reference>
<reference key="2">
    <citation type="journal article" date="1986" name="EMBO J.">
        <title>The chromosomal gene structure and two mRNAs for human granulocyte colony-stimulating factor.</title>
        <authorList>
            <person name="Nagata S."/>
            <person name="Tsuchiya M."/>
            <person name="Asano S."/>
            <person name="Yamamoto O."/>
            <person name="Hirata Y."/>
            <person name="Kubota N."/>
            <person name="Oheda M."/>
            <person name="Nomura H."/>
            <person name="Yamazaki T."/>
        </authorList>
    </citation>
    <scope>NUCLEOTIDE SEQUENCE [GENOMIC DNA / MRNA] (ISOFORM SHORT)</scope>
    <scope>ALTERNATIVE SPLICING</scope>
</reference>
<reference key="3">
    <citation type="journal article" date="1987" name="J. Leukoc. Biol.">
        <title>Expression of granulocyte colony-stimulating factor by human cell lines.</title>
        <authorList>
            <person name="Devlin J.J."/>
            <person name="Devlin P.E."/>
            <person name="Myambo K."/>
            <person name="Lilly M.B."/>
            <person name="Rado T.A."/>
            <person name="Warren M.K."/>
        </authorList>
    </citation>
    <scope>NUCLEOTIDE SEQUENCE [MRNA] (ISOFORM SHORT)</scope>
</reference>
<reference key="4">
    <citation type="submission" date="2001-06" db="EMBL/GenBank/DDBJ databases">
        <authorList>
            <consortium name="SeattleSNPs variation discovery resource"/>
        </authorList>
    </citation>
    <scope>NUCLEOTIDE SEQUENCE [GENOMIC DNA]</scope>
    <scope>VARIANTS MET-157 AND THR-174</scope>
</reference>
<reference key="5">
    <citation type="journal article" date="2004" name="Genomics">
        <title>PCR isolation and cloning of novel splice variant mRNAs from known drug target genes.</title>
        <authorList>
            <person name="Jin P."/>
            <person name="Fu G.K."/>
            <person name="Wilson A.D."/>
            <person name="Yang J."/>
            <person name="Chien D."/>
            <person name="Hawkins P.R."/>
            <person name="Au-Young J."/>
            <person name="Stuve L.L."/>
        </authorList>
    </citation>
    <scope>NUCLEOTIDE SEQUENCE [LARGE SCALE MRNA] (ISOFORM 3)</scope>
</reference>
<reference key="6">
    <citation type="journal article" date="2006" name="Nature">
        <title>DNA sequence of human chromosome 17 and analysis of rearrangement in the human lineage.</title>
        <authorList>
            <person name="Zody M.C."/>
            <person name="Garber M."/>
            <person name="Adams D.J."/>
            <person name="Sharpe T."/>
            <person name="Harrow J."/>
            <person name="Lupski J.R."/>
            <person name="Nicholson C."/>
            <person name="Searle S.M."/>
            <person name="Wilming L."/>
            <person name="Young S.K."/>
            <person name="Abouelleil A."/>
            <person name="Allen N.R."/>
            <person name="Bi W."/>
            <person name="Bloom T."/>
            <person name="Borowsky M.L."/>
            <person name="Bugalter B.E."/>
            <person name="Butler J."/>
            <person name="Chang J.L."/>
            <person name="Chen C.-K."/>
            <person name="Cook A."/>
            <person name="Corum B."/>
            <person name="Cuomo C.A."/>
            <person name="de Jong P.J."/>
            <person name="DeCaprio D."/>
            <person name="Dewar K."/>
            <person name="FitzGerald M."/>
            <person name="Gilbert J."/>
            <person name="Gibson R."/>
            <person name="Gnerre S."/>
            <person name="Goldstein S."/>
            <person name="Grafham D.V."/>
            <person name="Grocock R."/>
            <person name="Hafez N."/>
            <person name="Hagopian D.S."/>
            <person name="Hart E."/>
            <person name="Norman C.H."/>
            <person name="Humphray S."/>
            <person name="Jaffe D.B."/>
            <person name="Jones M."/>
            <person name="Kamal M."/>
            <person name="Khodiyar V.K."/>
            <person name="LaButti K."/>
            <person name="Laird G."/>
            <person name="Lehoczky J."/>
            <person name="Liu X."/>
            <person name="Lokyitsang T."/>
            <person name="Loveland J."/>
            <person name="Lui A."/>
            <person name="Macdonald P."/>
            <person name="Major J.E."/>
            <person name="Matthews L."/>
            <person name="Mauceli E."/>
            <person name="McCarroll S.A."/>
            <person name="Mihalev A.H."/>
            <person name="Mudge J."/>
            <person name="Nguyen C."/>
            <person name="Nicol R."/>
            <person name="O'Leary S.B."/>
            <person name="Osoegawa K."/>
            <person name="Schwartz D.C."/>
            <person name="Shaw-Smith C."/>
            <person name="Stankiewicz P."/>
            <person name="Steward C."/>
            <person name="Swarbreck D."/>
            <person name="Venkataraman V."/>
            <person name="Whittaker C.A."/>
            <person name="Yang X."/>
            <person name="Zimmer A.R."/>
            <person name="Bradley A."/>
            <person name="Hubbard T."/>
            <person name="Birren B.W."/>
            <person name="Rogers J."/>
            <person name="Lander E.S."/>
            <person name="Nusbaum C."/>
        </authorList>
    </citation>
    <scope>NUCLEOTIDE SEQUENCE [LARGE SCALE GENOMIC DNA]</scope>
</reference>
<reference key="7">
    <citation type="journal article" date="1986" name="Science">
        <title>Recombinant human granulocyte colony-stimulating factor: effects on normal and leukemic myeloid cells.</title>
        <authorList>
            <person name="Souza L.M."/>
            <person name="Boone T.C."/>
            <person name="Gabrilove J."/>
            <person name="Lai P.H."/>
            <person name="Zsebo K.M."/>
            <person name="Murdock D.C."/>
            <person name="Chazin V.R."/>
            <person name="Bruszewski J."/>
            <person name="Lu H."/>
            <person name="Chen K.K."/>
            <person name="Barendt J."/>
            <person name="Platzer E."/>
            <person name="Moore M.A.S."/>
            <person name="Mertelsmann R."/>
            <person name="Welte K."/>
        </authorList>
    </citation>
    <scope>NUCLEOTIDE SEQUENCE [MRNA] OF 19-207 (ISOFORM SHORT)</scope>
</reference>
<reference key="8">
    <citation type="journal article" date="1995" name="Arch. Biochem. Biophys.">
        <title>Extracellular domain of granulocyte-colony stimulating factor receptor. Interaction with its ligand and identification of a domain in close proximity of ligand-binding region.</title>
        <authorList>
            <person name="Haniu M."/>
            <person name="Horan T."/>
            <person name="Arakawa T."/>
            <person name="Le J."/>
            <person name="Katta V."/>
            <person name="Rohde M.F."/>
        </authorList>
    </citation>
    <scope>PROTEIN SEQUENCE OF 31-46</scope>
</reference>
<reference key="9">
    <citation type="journal article" date="1993" name="J. Chromatogr. A">
        <title>Glycosidase digestion, electrophoresis and chromatographic analysis of recombinant human granulocyte colony-stimulating factor glycoforms produced in Chinese hamster ovary cells.</title>
        <authorList>
            <person name="Clogston C.L."/>
            <person name="Hu S."/>
            <person name="Boone T.C."/>
            <person name="Lu H.S."/>
        </authorList>
    </citation>
    <scope>GLYCOSYLATION AT THR-166</scope>
</reference>
<reference key="10">
    <citation type="journal article" date="1992" name="FEBS Lett.">
        <title>Secondary structure of human granulocyte colony-stimulating factor derived from NMR spectroscopy.</title>
        <authorList>
            <person name="Zink T."/>
            <person name="Ross A."/>
            <person name="Ambrosius D."/>
            <person name="Rudolph R."/>
            <person name="Holak T.A."/>
        </authorList>
    </citation>
    <scope>STRUCTURE BY NMR</scope>
</reference>
<reference key="11">
    <citation type="journal article" date="1994" name="Biochemistry">
        <title>Structure and dynamics of the human granulocyte colony-stimulating factor determined by NMR spectroscopy. Loop mobility in a four-helix-bundle protein.</title>
        <authorList>
            <person name="Zink T."/>
            <person name="Ross A."/>
            <person name="Luers K."/>
            <person name="Cieslar C."/>
            <person name="Rudolph R."/>
            <person name="Holak T.A."/>
        </authorList>
    </citation>
    <scope>STRUCTURE BY NMR</scope>
</reference>
<reference key="12">
    <citation type="journal article" date="1993" name="Proc. Natl. Acad. Sci. U.S.A.">
        <title>The structure of granulocyte-colony-stimulating factor and its relationship to other growth factors.</title>
        <authorList>
            <person name="Hill C.P."/>
            <person name="Osslund T.D."/>
            <person name="Eisenberg D."/>
        </authorList>
    </citation>
    <scope>X-RAY CRYSTALLOGRAPHY (2.2 ANGSTROMS)</scope>
</reference>
<reference key="13">
    <citation type="journal article" date="1999" name="Nature">
        <title>Atomic structure of the GCSF-receptor complex showing a new cytokine-receptor recognition scheme.</title>
        <authorList>
            <person name="Aritomi M."/>
            <person name="Kunishima N."/>
            <person name="Okamoto T."/>
            <person name="Kuroki R."/>
            <person name="Ota Y."/>
            <person name="Morikawa K."/>
        </authorList>
    </citation>
    <scope>X-RAY CRYSTALLOGRAPHY (2.8 ANGSTROMS) OF 31-207 IN COMPLEX WITH CSF3R</scope>
</reference>
<reference key="14">
    <citation type="journal article" date="2006" name="Proc. Natl. Acad. Sci. U.S.A.">
        <title>Homodimeric cross-over structure of the human granulocyte colony-stimulating factor (GCSF) receptor signaling complex.</title>
        <authorList>
            <person name="Tamada T."/>
            <person name="Honjo E."/>
            <person name="Maeda Y."/>
            <person name="Okamoto T."/>
            <person name="Ishibashi M."/>
            <person name="Tokunaga M."/>
            <person name="Kuroki R."/>
        </authorList>
    </citation>
    <scope>X-RAY CRYSTALLOGRAPHY (2.8 ANGSTROMS) OF 31-207 IN COMPLEX WITH CSF3R</scope>
</reference>
<evidence type="ECO:0000250" key="1"/>
<evidence type="ECO:0000269" key="2">
    <source>
    </source>
</evidence>
<evidence type="ECO:0000269" key="3">
    <source>
    </source>
</evidence>
<evidence type="ECO:0000269" key="4">
    <source ref="4"/>
</evidence>
<evidence type="ECO:0000303" key="5">
    <source>
    </source>
</evidence>
<evidence type="ECO:0000303" key="6">
    <source>
    </source>
</evidence>
<evidence type="ECO:0000303" key="7">
    <source>
    </source>
</evidence>
<evidence type="ECO:0000303" key="8">
    <source>
    </source>
</evidence>
<evidence type="ECO:0000305" key="9"/>
<evidence type="ECO:0000305" key="10">
    <source>
    </source>
</evidence>
<evidence type="ECO:0007829" key="11">
    <source>
        <dbReference type="PDB" id="1CD9"/>
    </source>
</evidence>
<evidence type="ECO:0007829" key="12">
    <source>
        <dbReference type="PDB" id="1GNC"/>
    </source>
</evidence>
<evidence type="ECO:0007829" key="13">
    <source>
        <dbReference type="PDB" id="2D9Q"/>
    </source>
</evidence>
<evidence type="ECO:0007829" key="14">
    <source>
        <dbReference type="PDB" id="5GW9"/>
    </source>
</evidence>
<sequence>MAGPATQSPMKLMALQLLLWHSALWTVQEATPLGPASSLPQSFLLKCLEQVRKIQGDGAALQEKLVSECATYKLCHPEELVLLGHSLGIPWAPLSSCPSQALQLAGCLSQLHSGLFLYQGLLQALEGISPELGPTLDTLQLDVADFATTIWQQMEELGMAPALQPTQGAMPAFASAFQRRAGGVLVASHLQSFLEVSYRVLRHLAQP</sequence>
<gene>
    <name type="primary">CSF3</name>
    <name type="synonym">C17orf33</name>
    <name type="synonym">GCSF</name>
</gene>
<protein>
    <recommendedName>
        <fullName>Granulocyte colony-stimulating factor</fullName>
        <shortName>G-CSF</shortName>
    </recommendedName>
    <alternativeName>
        <fullName>Pluripoietin</fullName>
    </alternativeName>
    <innName>Filgrastim</innName>
    <innName>Lenograstim</innName>
</protein>
<accession>P09919</accession>
<accession>A8MXR7</accession>
<name>CSF3_HUMAN</name>
<proteinExistence type="evidence at protein level"/>
<keyword id="KW-0002">3D-structure</keyword>
<keyword id="KW-0025">Alternative splicing</keyword>
<keyword id="KW-0202">Cytokine</keyword>
<keyword id="KW-0903">Direct protein sequencing</keyword>
<keyword id="KW-1015">Disulfide bond</keyword>
<keyword id="KW-0325">Glycoprotein</keyword>
<keyword id="KW-0339">Growth factor</keyword>
<keyword id="KW-0582">Pharmaceutical</keyword>
<keyword id="KW-1267">Proteomics identification</keyword>
<keyword id="KW-1185">Reference proteome</keyword>
<keyword id="KW-0964">Secreted</keyword>
<keyword id="KW-0732">Signal</keyword>